<dbReference type="EC" id="2.3.1.297" evidence="7 8"/>
<dbReference type="EMBL" id="U08133">
    <property type="protein sequence ID" value="AAA21579.1"/>
    <property type="molecule type" value="Genomic_DNA"/>
</dbReference>
<dbReference type="EMBL" id="U05335">
    <property type="protein sequence ID" value="AAF21442.1"/>
    <property type="molecule type" value="Genomic_DNA"/>
</dbReference>
<dbReference type="EMBL" id="U10555">
    <property type="protein sequence ID" value="AAB68429.1"/>
    <property type="molecule type" value="Genomic_DNA"/>
</dbReference>
<dbReference type="EMBL" id="AY558514">
    <property type="protein sequence ID" value="AAS56840.1"/>
    <property type="molecule type" value="Genomic_DNA"/>
</dbReference>
<dbReference type="EMBL" id="BK006934">
    <property type="protein sequence ID" value="DAA06684.1"/>
    <property type="molecule type" value="Genomic_DNA"/>
</dbReference>
<dbReference type="PIR" id="S46800">
    <property type="entry name" value="S46800"/>
</dbReference>
<dbReference type="RefSeq" id="NP_011860.1">
    <property type="nucleotide sequence ID" value="NM_001179083.1"/>
</dbReference>
<dbReference type="PDB" id="8QTN">
    <property type="method" value="EM"/>
    <property type="resolution" value="3.00 A"/>
    <property type="chains" value="A=75-383"/>
</dbReference>
<dbReference type="PDB" id="8QTR">
    <property type="method" value="EM"/>
    <property type="resolution" value="3.20 A"/>
    <property type="chains" value="A=75-383"/>
</dbReference>
<dbReference type="PDBsum" id="8QTN"/>
<dbReference type="PDBsum" id="8QTR"/>
<dbReference type="EMDB" id="EMD-18652"/>
<dbReference type="EMDB" id="EMD-18653"/>
<dbReference type="SMR" id="P38703"/>
<dbReference type="BioGRID" id="36422">
    <property type="interactions" value="114"/>
</dbReference>
<dbReference type="ComplexPortal" id="CPX-1706">
    <property type="entry name" value="acyl-CoA ceramide synthase complex"/>
</dbReference>
<dbReference type="DIP" id="DIP-4393N"/>
<dbReference type="FunCoup" id="P38703">
    <property type="interactions" value="563"/>
</dbReference>
<dbReference type="IntAct" id="P38703">
    <property type="interactions" value="41"/>
</dbReference>
<dbReference type="MINT" id="P38703"/>
<dbReference type="STRING" id="4932.YHL003C"/>
<dbReference type="SwissLipids" id="SLP:000000276"/>
<dbReference type="GlyCosmos" id="P38703">
    <property type="glycosylation" value="1 site, No reported glycans"/>
</dbReference>
<dbReference type="GlyGen" id="P38703">
    <property type="glycosylation" value="1 site"/>
</dbReference>
<dbReference type="iPTMnet" id="P38703"/>
<dbReference type="PaxDb" id="4932-YHL003C"/>
<dbReference type="PeptideAtlas" id="P38703"/>
<dbReference type="EnsemblFungi" id="YHL003C_mRNA">
    <property type="protein sequence ID" value="YHL003C"/>
    <property type="gene ID" value="YHL003C"/>
</dbReference>
<dbReference type="GeneID" id="856386"/>
<dbReference type="KEGG" id="sce:YHL003C"/>
<dbReference type="AGR" id="SGD:S000000995"/>
<dbReference type="SGD" id="S000000995">
    <property type="gene designation" value="LAG1"/>
</dbReference>
<dbReference type="VEuPathDB" id="FungiDB:YHL003C"/>
<dbReference type="eggNOG" id="KOG1607">
    <property type="taxonomic scope" value="Eukaryota"/>
</dbReference>
<dbReference type="GeneTree" id="ENSGT01030000234515"/>
<dbReference type="HOGENOM" id="CLU_028277_4_0_1"/>
<dbReference type="InParanoid" id="P38703"/>
<dbReference type="OMA" id="HVLNLKI"/>
<dbReference type="OrthoDB" id="3053196at2759"/>
<dbReference type="BioCyc" id="MetaCyc:MONOMER3O-370"/>
<dbReference type="BioCyc" id="YEAST:MONOMER3O-370"/>
<dbReference type="BRENDA" id="2.3.1.24">
    <property type="organism ID" value="984"/>
</dbReference>
<dbReference type="BRENDA" id="2.3.1.297">
    <property type="organism ID" value="984"/>
</dbReference>
<dbReference type="Reactome" id="R-SCE-1660661">
    <property type="pathway name" value="Sphingolipid de novo biosynthesis"/>
</dbReference>
<dbReference type="UniPathway" id="UPA00222"/>
<dbReference type="BioGRID-ORCS" id="856386">
    <property type="hits" value="0 hits in 10 CRISPR screens"/>
</dbReference>
<dbReference type="PRO" id="PR:P38703"/>
<dbReference type="Proteomes" id="UP000002311">
    <property type="component" value="Chromosome VIII"/>
</dbReference>
<dbReference type="RNAct" id="P38703">
    <property type="molecule type" value="protein"/>
</dbReference>
<dbReference type="GO" id="GO:0061576">
    <property type="term" value="C:acyl-CoA ceramide synthase complex"/>
    <property type="evidence" value="ECO:0000314"/>
    <property type="project" value="SGD"/>
</dbReference>
<dbReference type="GO" id="GO:0005783">
    <property type="term" value="C:endoplasmic reticulum"/>
    <property type="evidence" value="ECO:0007005"/>
    <property type="project" value="SGD"/>
</dbReference>
<dbReference type="GO" id="GO:0005789">
    <property type="term" value="C:endoplasmic reticulum membrane"/>
    <property type="evidence" value="ECO:0007669"/>
    <property type="project" value="UniProtKB-SubCell"/>
</dbReference>
<dbReference type="GO" id="GO:0050291">
    <property type="term" value="F:sphingosine N-acyltransferase activity"/>
    <property type="evidence" value="ECO:0000314"/>
    <property type="project" value="SGD"/>
</dbReference>
<dbReference type="GO" id="GO:0046513">
    <property type="term" value="P:ceramide biosynthetic process"/>
    <property type="evidence" value="ECO:0000314"/>
    <property type="project" value="ComplexPortal"/>
</dbReference>
<dbReference type="InterPro" id="IPR016439">
    <property type="entry name" value="Lag1/Lac1-like"/>
</dbReference>
<dbReference type="InterPro" id="IPR006634">
    <property type="entry name" value="TLC-dom"/>
</dbReference>
<dbReference type="PANTHER" id="PTHR12560:SF11">
    <property type="entry name" value="CERAMIDE SYNTHASE LAC1-RELATED"/>
    <property type="match status" value="1"/>
</dbReference>
<dbReference type="PANTHER" id="PTHR12560">
    <property type="entry name" value="LONGEVITY ASSURANCE FACTOR 1 LAG1"/>
    <property type="match status" value="1"/>
</dbReference>
<dbReference type="Pfam" id="PF03798">
    <property type="entry name" value="TRAM_LAG1_CLN8"/>
    <property type="match status" value="1"/>
</dbReference>
<dbReference type="SMART" id="SM00724">
    <property type="entry name" value="TLC"/>
    <property type="match status" value="1"/>
</dbReference>
<dbReference type="PROSITE" id="PS50922">
    <property type="entry name" value="TLC"/>
    <property type="match status" value="1"/>
</dbReference>
<protein>
    <recommendedName>
        <fullName>Ceramide synthase LAG1</fullName>
    </recommendedName>
    <alternativeName>
        <fullName>Longevity assurance factor 1</fullName>
    </alternativeName>
    <alternativeName>
        <fullName>Longevity assurance gene 1 protein</fullName>
    </alternativeName>
    <alternativeName>
        <fullName>Longevity assurance protein 1</fullName>
    </alternativeName>
    <alternativeName>
        <fullName>Very-long-chain ceramide synthase LAG1</fullName>
        <ecNumber evidence="7 8">2.3.1.297</ecNumber>
    </alternativeName>
</protein>
<accession>P38703</accession>
<accession>D3DKR1</accession>
<accession>Q6LD26</accession>
<comment type="function">
    <text evidence="5 6 7 8 9 11 12 13 14 15 16">Component of the ceramide synthase complex that catalyzes the transfer of the acyl chain from acyl-CoA to a sphingoid base, with high selectivity toward hexacosanoyl-CoA (C26:0-CoA) (PubMed:11694577, PubMed:12869556, PubMed:37953642). N-acylates sphinganine and phytosphingosine bases to form dihydroceramides and phytoceramides, respectively (PubMed:12869556). Has a higher affinity for phytosphingosine (PHS) than dihydrosphingosine (DHS), and thus preferentially produces phytoceramides for the establishment of lateral diffusion barriers in the cortical endoplasmic reticulum and nuclear envelope (PubMed:31164445). Redundant with LAC1 but requires SUR2 to compensate for sphingolipid biosynthesis (PubMed:31164445, PubMed:39528796). Disruption or inhibition of sphingolipid synthesis leads to the activation and phosphorylation of YPK1 through the TORC2 and PKH1 pathways, which phosphorylates ORM1 and LAG1 to activate sphingolipid synthesis (PubMed:34492164). Facilitates ER-to-Golgi transport of GPI-anchored proteins. Involved in the aging process. Along with LAC1, plays a role in pheromone-induced MAP kinase-activation of mating and formation of diploid cells (PubMed:26726837). May also play a role, together with LAC1, in the polarized membrane distribution of phosphatidylinositol 4,5 biphosphate required for STE5 localization to the plasma membrane (PubMed:26726837).</text>
</comment>
<comment type="catalytic activity">
    <reaction evidence="7 8 15">
        <text>a very long-chain fatty acyl-CoA + a sphingoid base = an N-(very-long-chain fatty acyl)-sphingoid base + CoA + H(+)</text>
        <dbReference type="Rhea" id="RHEA:61480"/>
        <dbReference type="ChEBI" id="CHEBI:15378"/>
        <dbReference type="ChEBI" id="CHEBI:57287"/>
        <dbReference type="ChEBI" id="CHEBI:84410"/>
        <dbReference type="ChEBI" id="CHEBI:138261"/>
        <dbReference type="ChEBI" id="CHEBI:144712"/>
        <dbReference type="EC" id="2.3.1.297"/>
    </reaction>
    <physiologicalReaction direction="left-to-right" evidence="7 8 15">
        <dbReference type="Rhea" id="RHEA:61481"/>
    </physiologicalReaction>
</comment>
<comment type="catalytic activity">
    <reaction evidence="8">
        <text>hexacosanoyl-CoA + sphinganine = N-hexacosanoylsphinganine + CoA + H(+)</text>
        <dbReference type="Rhea" id="RHEA:33351"/>
        <dbReference type="ChEBI" id="CHEBI:15378"/>
        <dbReference type="ChEBI" id="CHEBI:52962"/>
        <dbReference type="ChEBI" id="CHEBI:57287"/>
        <dbReference type="ChEBI" id="CHEBI:57817"/>
        <dbReference type="ChEBI" id="CHEBI:64868"/>
    </reaction>
    <physiologicalReaction direction="left-to-right" evidence="8">
        <dbReference type="Rhea" id="RHEA:33352"/>
    </physiologicalReaction>
</comment>
<comment type="catalytic activity">
    <reaction evidence="8">
        <text>tetracosanoyl-CoA + sphinganine = N-tetracosanoylsphinganine + CoA + H(+)</text>
        <dbReference type="Rhea" id="RHEA:33591"/>
        <dbReference type="ChEBI" id="CHEBI:15378"/>
        <dbReference type="ChEBI" id="CHEBI:52961"/>
        <dbReference type="ChEBI" id="CHEBI:57287"/>
        <dbReference type="ChEBI" id="CHEBI:57817"/>
        <dbReference type="ChEBI" id="CHEBI:65052"/>
    </reaction>
    <physiologicalReaction direction="left-to-right" evidence="8">
        <dbReference type="Rhea" id="RHEA:33592"/>
    </physiologicalReaction>
</comment>
<comment type="catalytic activity">
    <reaction evidence="8">
        <text>eicosanoyl-CoA + sphinganine = N-eicosanoylsphinganine + CoA + H(+)</text>
        <dbReference type="Rhea" id="RHEA:36555"/>
        <dbReference type="ChEBI" id="CHEBI:15378"/>
        <dbReference type="ChEBI" id="CHEBI:57287"/>
        <dbReference type="ChEBI" id="CHEBI:57380"/>
        <dbReference type="ChEBI" id="CHEBI:57817"/>
        <dbReference type="ChEBI" id="CHEBI:67027"/>
    </reaction>
    <physiologicalReaction direction="left-to-right" evidence="8">
        <dbReference type="Rhea" id="RHEA:36556"/>
    </physiologicalReaction>
</comment>
<comment type="catalytic activity">
    <reaction evidence="7">
        <text>a fatty acyl-CoA + sphinganine = an N-acylsphinganine + CoA + H(+)</text>
        <dbReference type="Rhea" id="RHEA:34735"/>
        <dbReference type="ChEBI" id="CHEBI:15378"/>
        <dbReference type="ChEBI" id="CHEBI:31488"/>
        <dbReference type="ChEBI" id="CHEBI:57287"/>
        <dbReference type="ChEBI" id="CHEBI:57817"/>
        <dbReference type="ChEBI" id="CHEBI:77636"/>
    </reaction>
    <physiologicalReaction direction="left-to-right" evidence="7">
        <dbReference type="Rhea" id="RHEA:34736"/>
    </physiologicalReaction>
</comment>
<comment type="catalytic activity">
    <reaction evidence="7">
        <text>(4R)-hydroxysphinganine + a fatty acyl-CoA = an N-acyl-(4R)-4-hydroxysphinganine + CoA + H(+)</text>
        <dbReference type="Rhea" id="RHEA:35651"/>
        <dbReference type="ChEBI" id="CHEBI:15378"/>
        <dbReference type="ChEBI" id="CHEBI:31998"/>
        <dbReference type="ChEBI" id="CHEBI:57287"/>
        <dbReference type="ChEBI" id="CHEBI:64124"/>
        <dbReference type="ChEBI" id="CHEBI:77636"/>
    </reaction>
    <physiologicalReaction direction="left-to-right" evidence="7">
        <dbReference type="Rhea" id="RHEA:35652"/>
    </physiologicalReaction>
</comment>
<comment type="activity regulation">
    <text evidence="16">As part of the ceramide synthase complex, inhibited by the sphinganine analog mycotoxin, fumonisin B1 (FB1) (PubMed:39528796). Activated by ACB1, as part of the ceramide synthase complex (PubMed:39528796).</text>
</comment>
<comment type="pathway">
    <text evidence="7 8">Lipid metabolism; sphingolipid metabolism.</text>
</comment>
<comment type="subunit">
    <text evidence="15 16">Component of the ceramide synthase complex composed of at least LAC1, LAG1 and LIP1 (PubMed:37953642, PubMed:39528796). Forms a heterotetrameric complex, where one unit of the LIP1 homodimer interacts with LAC1 and the other with either LAC1 or LAG1 (PubMed:39528796).</text>
</comment>
<comment type="interaction">
    <interactant intactId="EBI-10035">
        <id>P38703</id>
    </interactant>
    <interactant intactId="EBI-26585">
        <id>P28496</id>
        <label>LAC1</label>
    </interactant>
    <organismsDiffer>false</organismsDiffer>
    <experiments>7</experiments>
</comment>
<comment type="interaction">
    <interactant intactId="EBI-10035">
        <id>P38703</id>
    </interactant>
    <interactant intactId="EBI-27640">
        <id>Q03579</id>
        <label>LIP1</label>
    </interactant>
    <organismsDiffer>false</organismsDiffer>
    <experiments>3</experiments>
</comment>
<comment type="subcellular location">
    <subcellularLocation>
        <location evidence="14">Endoplasmic reticulum membrane</location>
        <topology evidence="14 15">Multi-pass membrane protein</topology>
    </subcellularLocation>
    <text evidence="14">Localized to both cortical and nuclear endoplasmic reticulum.</text>
</comment>
<comment type="induction">
    <text evidence="10">Expression is controlled by CBF1.</text>
</comment>
<comment type="PTM">
    <text evidence="14">Phosphorylated; phosphorylation is induced upon disruption of sphingolipid synthesis.</text>
</comment>
<comment type="disruption phenotype">
    <text evidence="9 12 13 16">Deletion of LAG1 results in a pronounced increase (approximately 50%) in mean and in maximum life span (PubMed:15236759). Does not affect the level of total sphingolipids (PubMed:31164445). Exhibits weak diffusion barriers in both cortical ER and nuclear envelope (PubMed:31164445). Double knockout of LAC1 and LAG1 abolishes growth and leads to mating defects including defects in diploid cell formation, pheromone-induced shmoo formation, induction of cell cycle arrest and activation of mating-specific MAP kinase (PubMed:26726837, PubMed:39528796). Also defective in the localization of STE5 to the plasma membrane (PubMed:26726837).</text>
</comment>
<comment type="similarity">
    <text evidence="17">Belongs to the sphingosine N-acyltransferase family.</text>
</comment>
<proteinExistence type="evidence at protein level"/>
<evidence type="ECO:0000250" key="1">
    <source>
        <dbReference type="UniProtKB" id="P28496"/>
    </source>
</evidence>
<evidence type="ECO:0000255" key="2"/>
<evidence type="ECO:0000255" key="3">
    <source>
        <dbReference type="PROSITE-ProRule" id="PRU00205"/>
    </source>
</evidence>
<evidence type="ECO:0000256" key="4">
    <source>
        <dbReference type="SAM" id="MobiDB-lite"/>
    </source>
</evidence>
<evidence type="ECO:0000269" key="5">
    <source>
    </source>
</evidence>
<evidence type="ECO:0000269" key="6">
    <source>
    </source>
</evidence>
<evidence type="ECO:0000269" key="7">
    <source>
    </source>
</evidence>
<evidence type="ECO:0000269" key="8">
    <source>
    </source>
</evidence>
<evidence type="ECO:0000269" key="9">
    <source>
    </source>
</evidence>
<evidence type="ECO:0000269" key="10">
    <source>
    </source>
</evidence>
<evidence type="ECO:0000269" key="11">
    <source>
    </source>
</evidence>
<evidence type="ECO:0000269" key="12">
    <source>
    </source>
</evidence>
<evidence type="ECO:0000269" key="13">
    <source>
    </source>
</evidence>
<evidence type="ECO:0000269" key="14">
    <source>
    </source>
</evidence>
<evidence type="ECO:0000269" key="15">
    <source>
    </source>
</evidence>
<evidence type="ECO:0000269" key="16">
    <source>
    </source>
</evidence>
<evidence type="ECO:0000305" key="17"/>
<evidence type="ECO:0007744" key="18">
    <source>
        <dbReference type="PDB" id="8QTN"/>
    </source>
</evidence>
<evidence type="ECO:0007744" key="19">
    <source>
        <dbReference type="PDB" id="8QTR"/>
    </source>
</evidence>
<evidence type="ECO:0007744" key="20">
    <source>
    </source>
</evidence>
<keyword id="KW-0002">3D-structure</keyword>
<keyword id="KW-0256">Endoplasmic reticulum</keyword>
<keyword id="KW-0325">Glycoprotein</keyword>
<keyword id="KW-0444">Lipid biosynthesis</keyword>
<keyword id="KW-0443">Lipid metabolism</keyword>
<keyword id="KW-0472">Membrane</keyword>
<keyword id="KW-0597">Phosphoprotein</keyword>
<keyword id="KW-1185">Reference proteome</keyword>
<keyword id="KW-0808">Transferase</keyword>
<keyword id="KW-0812">Transmembrane</keyword>
<keyword id="KW-1133">Transmembrane helix</keyword>
<organism>
    <name type="scientific">Saccharomyces cerevisiae (strain ATCC 204508 / S288c)</name>
    <name type="common">Baker's yeast</name>
    <dbReference type="NCBI Taxonomy" id="559292"/>
    <lineage>
        <taxon>Eukaryota</taxon>
        <taxon>Fungi</taxon>
        <taxon>Dikarya</taxon>
        <taxon>Ascomycota</taxon>
        <taxon>Saccharomycotina</taxon>
        <taxon>Saccharomycetes</taxon>
        <taxon>Saccharomycetales</taxon>
        <taxon>Saccharomycetaceae</taxon>
        <taxon>Saccharomyces</taxon>
    </lineage>
</organism>
<gene>
    <name type="primary">LAG1</name>
    <name type="ordered locus">YHL003C</name>
</gene>
<name>LAG1_YEAST</name>
<feature type="chain" id="PRO_0000185527" description="Ceramide synthase LAG1">
    <location>
        <begin position="1"/>
        <end position="411"/>
    </location>
</feature>
<feature type="topological domain" description="Cytoplasmic" evidence="2">
    <location>
        <begin position="1"/>
        <end position="81"/>
    </location>
</feature>
<feature type="transmembrane region" description="Helical" evidence="16">
    <location>
        <begin position="82"/>
        <end position="102"/>
    </location>
</feature>
<feature type="topological domain" description="Lumenal" evidence="16">
    <location>
        <begin position="103"/>
        <end position="130"/>
    </location>
</feature>
<feature type="transmembrane region" description="Helical" evidence="16">
    <location>
        <begin position="131"/>
        <end position="155"/>
    </location>
</feature>
<feature type="topological domain" description="Cytoplasmic" evidence="16">
    <location>
        <begin position="156"/>
        <end position="172"/>
    </location>
</feature>
<feature type="transmembrane region" description="Helical" evidence="16">
    <location>
        <begin position="173"/>
        <end position="194"/>
    </location>
</feature>
<feature type="topological domain" description="Lumenal" evidence="16">
    <location>
        <begin position="195"/>
        <end position="217"/>
    </location>
</feature>
<feature type="transmembrane region" description="Helical" evidence="16">
    <location>
        <begin position="218"/>
        <end position="240"/>
    </location>
</feature>
<feature type="topological domain" description="Cytoplasmic" evidence="16">
    <location>
        <begin position="241"/>
        <end position="249"/>
    </location>
</feature>
<feature type="transmembrane region" description="Helical" evidence="16">
    <location>
        <begin position="250"/>
        <end position="268"/>
    </location>
</feature>
<feature type="topological domain" description="Lumenal" evidence="16">
    <location>
        <begin position="269"/>
        <end position="273"/>
    </location>
</feature>
<feature type="transmembrane region" description="Helical" evidence="16">
    <location>
        <begin position="274"/>
        <end position="295"/>
    </location>
</feature>
<feature type="topological domain" description="Cytoplasmic" evidence="16">
    <location>
        <begin position="296"/>
        <end position="305"/>
    </location>
</feature>
<feature type="transmembrane region" description="Helical" evidence="16">
    <location>
        <begin position="306"/>
        <end position="334"/>
    </location>
</feature>
<feature type="topological domain" description="Lumenal" evidence="16">
    <location>
        <begin position="335"/>
        <end position="353"/>
    </location>
</feature>
<feature type="transmembrane region" description="Helical" evidence="16">
    <location>
        <begin position="354"/>
        <end position="382"/>
    </location>
</feature>
<feature type="topological domain" description="Cytoplasmic" evidence="16">
    <location>
        <begin position="383"/>
        <end position="411"/>
    </location>
</feature>
<feature type="domain" description="TLC" evidence="1 3">
    <location>
        <begin position="168"/>
        <end position="385"/>
    </location>
</feature>
<feature type="region of interest" description="Disordered" evidence="4">
    <location>
        <begin position="390"/>
        <end position="411"/>
    </location>
</feature>
<feature type="binding site" evidence="16 19">
    <location>
        <position position="252"/>
    </location>
    <ligand>
        <name>fumonisin B1</name>
        <dbReference type="ChEBI" id="CHEBI:62554"/>
    </ligand>
</feature>
<feature type="binding site" evidence="16 19">
    <location>
        <position position="258"/>
    </location>
    <ligand>
        <name>hexacosanoate</name>
        <dbReference type="ChEBI" id="CHEBI:31013"/>
    </ligand>
</feature>
<feature type="binding site" evidence="16 19">
    <location>
        <position position="303"/>
    </location>
    <ligand>
        <name>fumonisin B1</name>
        <dbReference type="ChEBI" id="CHEBI:62554"/>
    </ligand>
</feature>
<feature type="binding site" evidence="16 19">
    <location>
        <position position="304"/>
    </location>
    <ligand>
        <name>fumonisin B1</name>
        <dbReference type="ChEBI" id="CHEBI:62554"/>
    </ligand>
</feature>
<feature type="binding site" evidence="16 19">
    <location>
        <position position="318"/>
    </location>
    <ligand>
        <name>fumonisin B1</name>
        <dbReference type="ChEBI" id="CHEBI:62554"/>
    </ligand>
</feature>
<feature type="binding site" evidence="16 19">
    <location>
        <position position="341"/>
    </location>
    <ligand>
        <name>hexacosanoate</name>
        <dbReference type="ChEBI" id="CHEBI:31013"/>
    </ligand>
</feature>
<feature type="binding site" evidence="16 19">
    <location>
        <position position="350"/>
    </location>
    <ligand>
        <name>hexacosanoate</name>
        <dbReference type="ChEBI" id="CHEBI:31013"/>
    </ligand>
</feature>
<feature type="binding site" evidence="16 19">
    <location>
        <position position="364"/>
    </location>
    <ligand>
        <name>hexacosanoate</name>
        <dbReference type="ChEBI" id="CHEBI:31013"/>
    </ligand>
</feature>
<feature type="binding site" evidence="16 19">
    <location>
        <position position="378"/>
    </location>
    <ligand>
        <name>fumonisin B1</name>
        <dbReference type="ChEBI" id="CHEBI:62554"/>
    </ligand>
</feature>
<feature type="binding site" evidence="16 19">
    <location>
        <position position="381"/>
    </location>
    <ligand>
        <name>fumonisin B1</name>
        <dbReference type="ChEBI" id="CHEBI:62554"/>
    </ligand>
</feature>
<feature type="binding site" evidence="16 19">
    <location>
        <position position="382"/>
    </location>
    <ligand>
        <name>fumonisin B1</name>
        <dbReference type="ChEBI" id="CHEBI:62554"/>
    </ligand>
</feature>
<feature type="modified residue" description="Phosphoserine" evidence="14 20">
    <location>
        <position position="23"/>
    </location>
</feature>
<feature type="modified residue" description="Phosphoserine" evidence="14 20">
    <location>
        <position position="24"/>
    </location>
</feature>
<feature type="glycosylation site" description="N-linked (GlcNAc...) asparagine" evidence="2">
    <location>
        <position position="103"/>
    </location>
</feature>
<feature type="mutagenesis site" description="Exhibits higher sensitivity to myriocin disruption of sphingolipid synthesis in a LIP1 mutant background." evidence="14">
    <original>SS</original>
    <variation>AA</variation>
    <location>
        <begin position="23"/>
        <end position="24"/>
    </location>
</feature>
<feature type="mutagenesis site" description="Abolishes the enzymatic activity of the LAG1-LIP1 complex." evidence="15">
    <original>HH</original>
    <variation>AA</variation>
    <location>
        <begin position="255"/>
        <end position="256"/>
    </location>
</feature>
<reference key="1">
    <citation type="journal article" date="1994" name="J. Biol. Chem.">
        <title>Cloning and characterization of LAG1, a longevity-assurance gene in yeast.</title>
        <authorList>
            <person name="D'Mello N.P."/>
            <person name="Childress A.M."/>
            <person name="Franklin D.S."/>
            <person name="Kale S.P."/>
            <person name="Pinswasdi C."/>
            <person name="Jazwinski S.M."/>
        </authorList>
    </citation>
    <scope>NUCLEOTIDE SEQUENCE [GENOMIC DNA]</scope>
    <source>
        <strain>ATCC 26786 / X2180-1A</strain>
    </source>
</reference>
<reference key="2">
    <citation type="submission" date="1994-03" db="EMBL/GenBank/DDBJ databases">
        <authorList>
            <person name="Jazwinski S.M."/>
        </authorList>
    </citation>
    <scope>SEQUENCE REVISION TO 173-174; 220 AND 301-411</scope>
</reference>
<reference key="3">
    <citation type="submission" date="1994-01" db="EMBL/GenBank/DDBJ databases">
        <authorList>
            <person name="Manske M."/>
            <person name="Sommer T."/>
            <person name="Prehn S."/>
            <person name="Rapoport T.A."/>
            <person name="Hartmann E."/>
        </authorList>
    </citation>
    <scope>NUCLEOTIDE SEQUENCE [GENOMIC DNA]</scope>
</reference>
<reference key="4">
    <citation type="journal article" date="1994" name="Science">
        <title>Complete nucleotide sequence of Saccharomyces cerevisiae chromosome VIII.</title>
        <authorList>
            <person name="Johnston M."/>
            <person name="Andrews S."/>
            <person name="Brinkman R."/>
            <person name="Cooper J."/>
            <person name="Ding H."/>
            <person name="Dover J."/>
            <person name="Du Z."/>
            <person name="Favello A."/>
            <person name="Fulton L."/>
            <person name="Gattung S."/>
            <person name="Geisel C."/>
            <person name="Kirsten J."/>
            <person name="Kucaba T."/>
            <person name="Hillier L.W."/>
            <person name="Jier M."/>
            <person name="Johnston L."/>
            <person name="Langston Y."/>
            <person name="Latreille P."/>
            <person name="Louis E.J."/>
            <person name="Macri C."/>
            <person name="Mardis E."/>
            <person name="Menezes S."/>
            <person name="Mouser L."/>
            <person name="Nhan M."/>
            <person name="Rifkin L."/>
            <person name="Riles L."/>
            <person name="St Peter H."/>
            <person name="Trevaskis E."/>
            <person name="Vaughan K."/>
            <person name="Vignati D."/>
            <person name="Wilcox L."/>
            <person name="Wohldman P."/>
            <person name="Waterston R."/>
            <person name="Wilson R."/>
            <person name="Vaudin M."/>
        </authorList>
    </citation>
    <scope>NUCLEOTIDE SEQUENCE [LARGE SCALE GENOMIC DNA]</scope>
    <source>
        <strain>ATCC 204508 / S288c</strain>
    </source>
</reference>
<reference key="5">
    <citation type="journal article" date="2014" name="G3 (Bethesda)">
        <title>The reference genome sequence of Saccharomyces cerevisiae: Then and now.</title>
        <authorList>
            <person name="Engel S.R."/>
            <person name="Dietrich F.S."/>
            <person name="Fisk D.G."/>
            <person name="Binkley G."/>
            <person name="Balakrishnan R."/>
            <person name="Costanzo M.C."/>
            <person name="Dwight S.S."/>
            <person name="Hitz B.C."/>
            <person name="Karra K."/>
            <person name="Nash R.S."/>
            <person name="Weng S."/>
            <person name="Wong E.D."/>
            <person name="Lloyd P."/>
            <person name="Skrzypek M.S."/>
            <person name="Miyasato S.R."/>
            <person name="Simison M."/>
            <person name="Cherry J.M."/>
        </authorList>
    </citation>
    <scope>GENOME REANNOTATION</scope>
    <source>
        <strain>ATCC 204508 / S288c</strain>
    </source>
</reference>
<reference key="6">
    <citation type="journal article" date="2007" name="Genome Res.">
        <title>Approaching a complete repository of sequence-verified protein-encoding clones for Saccharomyces cerevisiae.</title>
        <authorList>
            <person name="Hu Y."/>
            <person name="Rolfs A."/>
            <person name="Bhullar B."/>
            <person name="Murthy T.V.S."/>
            <person name="Zhu C."/>
            <person name="Berger M.F."/>
            <person name="Camargo A.A."/>
            <person name="Kelley F."/>
            <person name="McCarron S."/>
            <person name="Jepson D."/>
            <person name="Richardson A."/>
            <person name="Raphael J."/>
            <person name="Moreira D."/>
            <person name="Taycher E."/>
            <person name="Zuo D."/>
            <person name="Mohr S."/>
            <person name="Kane M.F."/>
            <person name="Williamson J."/>
            <person name="Simpson A.J.G."/>
            <person name="Bulyk M.L."/>
            <person name="Harlow E."/>
            <person name="Marsischky G."/>
            <person name="Kolodner R.D."/>
            <person name="LaBaer J."/>
        </authorList>
    </citation>
    <scope>NUCLEOTIDE SEQUENCE [GENOMIC DNA]</scope>
    <source>
        <strain>ATCC 204508 / S288c</strain>
    </source>
</reference>
<reference key="7">
    <citation type="journal article" date="1999" name="Mol. Biol. Cell">
        <title>Two endoplasmic reticulum (ER) membrane proteins that facilitate ER-to-Golgi transport of glycosylphosphatidylinositol-anchored proteins.</title>
        <authorList>
            <person name="Barz W.P."/>
            <person name="Walter P."/>
        </authorList>
    </citation>
    <scope>FUNCTION</scope>
</reference>
<reference key="8">
    <citation type="journal article" date="2001" name="EMBO J.">
        <title>C26-CoA-dependent ceramide synthesis of Saccharomyces cerevisiae is operated by Lag1p and Lac1p.</title>
        <authorList>
            <person name="Guillas I."/>
            <person name="Kirchman P.A."/>
            <person name="Chuard R."/>
            <person name="Pfefferli M."/>
            <person name="Jiang J.C."/>
            <person name="Jazwinski S.M."/>
            <person name="Conzelmann A."/>
        </authorList>
    </citation>
    <scope>FUNCTION</scope>
</reference>
<reference key="9">
    <citation type="journal article" date="2001" name="Mol. Biol. Cell">
        <title>Lag1p and Lac1p are essential for the acyl-CoA-dependent ceramide synthase reaction in Saccharomyces cerevisae.</title>
        <authorList>
            <person name="Schorling S."/>
            <person name="Vallee B."/>
            <person name="Barz W.P."/>
            <person name="Riezman H."/>
            <person name="Oesterhelt D."/>
        </authorList>
    </citation>
    <scope>FUNCTION</scope>
    <scope>CATALYTIC ACTIVITY</scope>
</reference>
<reference key="10">
    <citation type="journal article" date="2002" name="Trends Biochem. Sci.">
        <title>TRAM, LAG1 and CLN8: members of a novel family of lipid-sensing domains?</title>
        <authorList>
            <person name="Winter E."/>
            <person name="Ponting C.P."/>
        </authorList>
    </citation>
    <scope>DOMAIN</scope>
    <scope>TOPOLOGY</scope>
</reference>
<reference key="11">
    <citation type="journal article" date="2003" name="J. Biol. Chem.">
        <title>Human homologues of LAG1 reconstitute Acyl-CoA-dependent ceramide synthesis in yeast.</title>
        <authorList>
            <person name="Guillas I."/>
            <person name="Jiang J.C."/>
            <person name="Vionnet C."/>
            <person name="Roubaty C."/>
            <person name="Uldry D."/>
            <person name="Chuard R."/>
            <person name="Wang J."/>
            <person name="Jazwinski S.M."/>
            <person name="Conzelmann A."/>
        </authorList>
    </citation>
    <scope>FUNCTION</scope>
    <scope>CATALYTIC ACTIVITY</scope>
</reference>
<reference key="12">
    <citation type="journal article" date="2003" name="Nature">
        <title>Global analysis of protein localization in budding yeast.</title>
        <authorList>
            <person name="Huh W.-K."/>
            <person name="Falvo J.V."/>
            <person name="Gerke L.C."/>
            <person name="Carroll A.S."/>
            <person name="Howson R.W."/>
            <person name="Weissman J.S."/>
            <person name="O'Shea E.K."/>
        </authorList>
    </citation>
    <scope>SUBCELLULAR LOCATION [LARGE SCALE ANALYSIS]</scope>
</reference>
<reference key="13">
    <citation type="journal article" date="2004" name="Eukaryot. Cell">
        <title>Differential regulation of ceramide synthase components LAC1 and LAG1 in Saccharomyces cerevisiae.</title>
        <authorList>
            <person name="Kolaczkowski M."/>
            <person name="Kolaczkowska A."/>
            <person name="Gaigg B."/>
            <person name="Schneiter R."/>
            <person name="Moye-Rowley W.S."/>
        </authorList>
    </citation>
    <scope>INDUCTION</scope>
</reference>
<reference key="14">
    <citation type="journal article" date="2004" name="Exp. Gerontol.">
        <title>Suppressor analysis points to the subtle role of the LAG1 ceramide synthase gene in determining yeast longevity.</title>
        <authorList>
            <person name="Jiang J.C."/>
            <person name="Kirchman P.A."/>
            <person name="Allen M."/>
            <person name="Jazwinski S.M."/>
        </authorList>
    </citation>
    <scope>FUNCTION</scope>
</reference>
<reference key="15">
    <citation type="journal article" date="2005" name="EMBO J.">
        <title>Lip1p: a novel subunit of acyl-CoA ceramide synthase.</title>
        <authorList>
            <person name="Vallee B."/>
            <person name="Riezman H."/>
        </authorList>
    </citation>
    <scope>FUNCTION</scope>
    <scope>IDENTIFICATION BY MASS SPECTROMETRY</scope>
    <scope>INTERACTION WITH LAC1 AND LIP1</scope>
</reference>
<reference key="16">
    <citation type="journal article" date="2006" name="Biochem. J.">
        <title>Transmembrane topology of ceramide synthase in yeast.</title>
        <authorList>
            <person name="Kageyama-Yahara N."/>
            <person name="Riezman H."/>
        </authorList>
    </citation>
    <scope>TOPOLOGY</scope>
</reference>
<reference key="17">
    <citation type="journal article" date="2006" name="Proc. Natl. Acad. Sci. U.S.A.">
        <title>A global topology map of the Saccharomyces cerevisiae membrane proteome.</title>
        <authorList>
            <person name="Kim H."/>
            <person name="Melen K."/>
            <person name="Oesterberg M."/>
            <person name="von Heijne G."/>
        </authorList>
    </citation>
    <scope>TOPOLOGY [LARGE SCALE ANALYSIS]</scope>
    <source>
        <strain>ATCC 208353 / W303-1A</strain>
    </source>
</reference>
<reference key="18">
    <citation type="journal article" date="2007" name="J. Proteome Res.">
        <title>Large-scale phosphorylation analysis of alpha-factor-arrested Saccharomyces cerevisiae.</title>
        <authorList>
            <person name="Li X."/>
            <person name="Gerber S.A."/>
            <person name="Rudner A.D."/>
            <person name="Beausoleil S.A."/>
            <person name="Haas W."/>
            <person name="Villen J."/>
            <person name="Elias J.E."/>
            <person name="Gygi S.P."/>
        </authorList>
    </citation>
    <scope>IDENTIFICATION BY MASS SPECTROMETRY [LARGE SCALE ANALYSIS]</scope>
    <source>
        <strain>ADR376</strain>
    </source>
</reference>
<reference key="19">
    <citation type="journal article" date="2008" name="Mol. Cell. Proteomics">
        <title>A multidimensional chromatography technology for in-depth phosphoproteome analysis.</title>
        <authorList>
            <person name="Albuquerque C.P."/>
            <person name="Smolka M.B."/>
            <person name="Payne S.H."/>
            <person name="Bafna V."/>
            <person name="Eng J."/>
            <person name="Zhou H."/>
        </authorList>
    </citation>
    <scope>IDENTIFICATION BY MASS SPECTROMETRY [LARGE SCALE ANALYSIS]</scope>
</reference>
<reference key="20">
    <citation type="journal article" date="2009" name="Science">
        <title>Global analysis of Cdk1 substrate phosphorylation sites provides insights into evolution.</title>
        <authorList>
            <person name="Holt L.J."/>
            <person name="Tuch B.B."/>
            <person name="Villen J."/>
            <person name="Johnson A.D."/>
            <person name="Gygi S.P."/>
            <person name="Morgan D.O."/>
        </authorList>
    </citation>
    <scope>PHOSPHORYLATION [LARGE SCALE ANALYSIS] AT SER-23 AND SER-24</scope>
    <scope>IDENTIFICATION BY MASS SPECTROMETRY [LARGE SCALE ANALYSIS]</scope>
</reference>
<reference key="21">
    <citation type="journal article" date="2012" name="Proc. Natl. Acad. Sci. U.S.A.">
        <title>N-terminal acetylome analyses and functional insights of the N-terminal acetyltransferase NatB.</title>
        <authorList>
            <person name="Van Damme P."/>
            <person name="Lasa M."/>
            <person name="Polevoda B."/>
            <person name="Gazquez C."/>
            <person name="Elosegui-Artola A."/>
            <person name="Kim D.S."/>
            <person name="De Juan-Pardo E."/>
            <person name="Demeyer K."/>
            <person name="Hole K."/>
            <person name="Larrea E."/>
            <person name="Timmerman E."/>
            <person name="Prieto J."/>
            <person name="Arnesen T."/>
            <person name="Sherman F."/>
            <person name="Gevaert K."/>
            <person name="Aldabe R."/>
        </authorList>
    </citation>
    <scope>IDENTIFICATION BY MASS SPECTROMETRY [LARGE SCALE ANALYSIS]</scope>
</reference>
<reference evidence="17" key="22">
    <citation type="journal article" date="2016" name="Cell Cycle">
        <title>Ceramide signals for initiation of yeast mating-specific cell cycle arrest.</title>
        <authorList>
            <person name="Villasmil M.L."/>
            <person name="Francisco J."/>
            <person name="Gallo-Ebert C."/>
            <person name="Donigan M."/>
            <person name="Liu H.Y."/>
            <person name="Brower M."/>
            <person name="Nickels J.T. Jr."/>
        </authorList>
    </citation>
    <scope>FUNCTION</scope>
    <scope>DISRUPTION PHENOTYPE</scope>
</reference>
<reference evidence="17" key="23">
    <citation type="journal article" date="2019" name="J. Cell Sci.">
        <title>Yeast ceramide synthases, Lag1 and Lac1, have distinct substrate specificity.</title>
        <authorList>
            <person name="Megyeri M."/>
            <person name="Prasad R."/>
            <person name="Volpert G."/>
            <person name="Sliwa-Gonzalez A."/>
            <person name="Haribowo A.G."/>
            <person name="Aguilera-Romero A."/>
            <person name="Riezman H."/>
            <person name="Barral Y."/>
            <person name="Futerman A.H."/>
            <person name="Schuldiner M."/>
        </authorList>
    </citation>
    <scope>FUNCTION</scope>
    <scope>DISRUPTION PHENOTYPE</scope>
</reference>
<reference evidence="17" key="24">
    <citation type="journal article" date="2022" name="FEBS J.">
        <title>Regulation of sphingolipid biosynthesis in the endoplasmic reticulum via signals from the plasma membrane in budding yeast.</title>
        <authorList>
            <person name="Ishino Y."/>
            <person name="Komatsu N."/>
            <person name="Sakata K.T."/>
            <person name="Yoshikawa D."/>
            <person name="Tani M."/>
            <person name="Maeda T."/>
            <person name="Morishige K."/>
            <person name="Yoshizawa K."/>
            <person name="Tanaka N."/>
            <person name="Tabuchi M."/>
        </authorList>
    </citation>
    <scope>FUNCTION</scope>
    <scope>SUBCELLULAR LOCATION</scope>
    <scope>PHOSPHORYLATION AT SER-23 AND SER-24</scope>
    <scope>MUTAGENESIS OF SER-23 AND SER-24</scope>
</reference>
<reference evidence="17" key="25">
    <citation type="journal article" date="2023" name="EMBO J.">
        <title>Structure and mechanism of a eukaryotic ceramide synthase complex.</title>
        <authorList>
            <person name="Xie T."/>
            <person name="Fang Q."/>
            <person name="Zhang Z."/>
            <person name="Wang Y."/>
            <person name="Dong F."/>
            <person name="Gong X."/>
        </authorList>
    </citation>
    <scope>FUNCTION</scope>
    <scope>CATALYTIC ACTIVITY</scope>
    <scope>SUBUNIT</scope>
    <scope>MUTAGENESIS OF HIS-255 AND HIS-256</scope>
</reference>
<reference evidence="18 19" key="26">
    <citation type="journal article" date="2024" name="Nat. Struct. Mol. Biol.">
        <title>Structure of the yeast ceramide synthase.</title>
        <authorList>
            <person name="Schafer J.H."/>
            <person name="Clausmeyer L."/>
            <person name="Korner C."/>
            <person name="Esch B.M."/>
            <person name="Wolf V.N."/>
            <person name="Sapia J."/>
            <person name="Ahmed Y."/>
            <person name="Walter S."/>
            <person name="Vanni S."/>
            <person name="Januliene D."/>
            <person name="Moeller A."/>
            <person name="Frohlich F."/>
        </authorList>
    </citation>
    <scope>STRUCTURE BY ELECTRON MICROSCOPY (3.00 ANGSTROMS) OF 75-383 IN COMPLEX WITH LAC1; LIP1; HEXACOSANOIC ACID; 1,2-DISTEAROYL-SN-GLYCERO-3-PHOSPHOETHANOLAMINE AND FUMONISIN B1</scope>
    <scope>FUNCTION</scope>
    <scope>SUBUNIT</scope>
    <scope>DISRUPTION PHENOTYPE</scope>
</reference>
<sequence>MTSATDKSIDRLVVNAKTRRRNSSVGKIDLGDTVPGFAAMPESAASKNEAKKRMKALTGDSKKDSDLLWKVWFSYREMNYRHSWLTPFFILVCVYSAYFLSGNRTESNPLHMFVAISYQVDGTDSYAKGIKDLSFVFFYMIFFTFLREFLMDVVIRPFTVYLNVTSEHRQKRMLEQMYAIFYCGVSGPFGLYIMYHSDLWLFKTKPMYRTYPVITNPFLFKIFYLGQAAFWAQQACVLVLQLEKPRKDYKELVFHHIVTLLLIWSSYVFHFTKMGLAIYITMDVSDFFLSLSKTLNYLNSVFTPFVFGLFVFFWIYLRHVVNIRILWSVLTEFRHEGNYVLNFATQQYKCWISLPIVFVLIAALQLVNLYWLFLILRILYRLIWQGIQKDERSDSDSDESAENEESKEKCE</sequence>